<gene>
    <name evidence="2" type="primary">psaC</name>
</gene>
<name>PSAC_GOSHI</name>
<reference key="1">
    <citation type="journal article" date="2006" name="BMC Genomics">
        <title>The complete chloroplast genome sequence of Gossypium hirsutum: organization and phylogenetic relationships to other angiosperms.</title>
        <authorList>
            <person name="Lee S.-B."/>
            <person name="Kaittanis C."/>
            <person name="Jansen R.K."/>
            <person name="Hostetler J.B."/>
            <person name="Tallon L.J."/>
            <person name="Town C.D."/>
            <person name="Daniell H."/>
        </authorList>
    </citation>
    <scope>NUCLEOTIDE SEQUENCE [LARGE SCALE GENOMIC DNA]</scope>
    <source>
        <strain>cv. Coker 310FR</strain>
    </source>
</reference>
<protein>
    <recommendedName>
        <fullName evidence="2">Photosystem I iron-sulfur center</fullName>
        <ecNumber evidence="2">1.97.1.12</ecNumber>
    </recommendedName>
    <alternativeName>
        <fullName evidence="2">9 kDa polypeptide</fullName>
    </alternativeName>
    <alternativeName>
        <fullName evidence="2">PSI-C</fullName>
    </alternativeName>
    <alternativeName>
        <fullName evidence="2">Photosystem I subunit VII</fullName>
    </alternativeName>
    <alternativeName>
        <fullName evidence="2">PsaC</fullName>
    </alternativeName>
</protein>
<dbReference type="EC" id="1.97.1.12" evidence="2"/>
<dbReference type="EMBL" id="DQ345959">
    <property type="protein sequence ID" value="ABC73681.1"/>
    <property type="molecule type" value="Genomic_DNA"/>
</dbReference>
<dbReference type="RefSeq" id="YP_538989.1">
    <property type="nucleotide sequence ID" value="NC_007944.1"/>
</dbReference>
<dbReference type="SMR" id="Q2L956"/>
<dbReference type="GeneID" id="3989240"/>
<dbReference type="KEGG" id="ghi:3989240"/>
<dbReference type="OMA" id="PINVLQM"/>
<dbReference type="OrthoDB" id="6546at41938"/>
<dbReference type="Proteomes" id="UP000189702">
    <property type="component" value="Chloroplast Pltd"/>
</dbReference>
<dbReference type="GO" id="GO:0009535">
    <property type="term" value="C:chloroplast thylakoid membrane"/>
    <property type="evidence" value="ECO:0007669"/>
    <property type="project" value="UniProtKB-SubCell"/>
</dbReference>
<dbReference type="GO" id="GO:0009522">
    <property type="term" value="C:photosystem I"/>
    <property type="evidence" value="ECO:0007669"/>
    <property type="project" value="UniProtKB-KW"/>
</dbReference>
<dbReference type="GO" id="GO:0051539">
    <property type="term" value="F:4 iron, 4 sulfur cluster binding"/>
    <property type="evidence" value="ECO:0007669"/>
    <property type="project" value="UniProtKB-KW"/>
</dbReference>
<dbReference type="GO" id="GO:0009055">
    <property type="term" value="F:electron transfer activity"/>
    <property type="evidence" value="ECO:0007669"/>
    <property type="project" value="UniProtKB-UniRule"/>
</dbReference>
<dbReference type="GO" id="GO:0046872">
    <property type="term" value="F:metal ion binding"/>
    <property type="evidence" value="ECO:0007669"/>
    <property type="project" value="UniProtKB-KW"/>
</dbReference>
<dbReference type="GO" id="GO:0016491">
    <property type="term" value="F:oxidoreductase activity"/>
    <property type="evidence" value="ECO:0007669"/>
    <property type="project" value="UniProtKB-KW"/>
</dbReference>
<dbReference type="GO" id="GO:0015979">
    <property type="term" value="P:photosynthesis"/>
    <property type="evidence" value="ECO:0000318"/>
    <property type="project" value="GO_Central"/>
</dbReference>
<dbReference type="GO" id="GO:0009773">
    <property type="term" value="P:photosynthetic electron transport in photosystem I"/>
    <property type="evidence" value="ECO:0007669"/>
    <property type="project" value="InterPro"/>
</dbReference>
<dbReference type="FunFam" id="3.30.70.20:FF:000001">
    <property type="entry name" value="Photosystem I iron-sulfur center"/>
    <property type="match status" value="1"/>
</dbReference>
<dbReference type="Gene3D" id="3.30.70.20">
    <property type="match status" value="1"/>
</dbReference>
<dbReference type="HAMAP" id="MF_01303">
    <property type="entry name" value="PSI_PsaC"/>
    <property type="match status" value="1"/>
</dbReference>
<dbReference type="InterPro" id="IPR017896">
    <property type="entry name" value="4Fe4S_Fe-S-bd"/>
</dbReference>
<dbReference type="InterPro" id="IPR017900">
    <property type="entry name" value="4Fe4S_Fe_S_CS"/>
</dbReference>
<dbReference type="InterPro" id="IPR050157">
    <property type="entry name" value="PSI_iron-sulfur_center"/>
</dbReference>
<dbReference type="InterPro" id="IPR017491">
    <property type="entry name" value="PSI_PsaC"/>
</dbReference>
<dbReference type="NCBIfam" id="TIGR03048">
    <property type="entry name" value="PS_I_psaC"/>
    <property type="match status" value="1"/>
</dbReference>
<dbReference type="PANTHER" id="PTHR24960:SF79">
    <property type="entry name" value="PHOTOSYSTEM I IRON-SULFUR CENTER"/>
    <property type="match status" value="1"/>
</dbReference>
<dbReference type="PANTHER" id="PTHR24960">
    <property type="entry name" value="PHOTOSYSTEM I IRON-SULFUR CENTER-RELATED"/>
    <property type="match status" value="1"/>
</dbReference>
<dbReference type="Pfam" id="PF14697">
    <property type="entry name" value="Fer4_21"/>
    <property type="match status" value="1"/>
</dbReference>
<dbReference type="SUPFAM" id="SSF54862">
    <property type="entry name" value="4Fe-4S ferredoxins"/>
    <property type="match status" value="1"/>
</dbReference>
<dbReference type="PROSITE" id="PS00198">
    <property type="entry name" value="4FE4S_FER_1"/>
    <property type="match status" value="2"/>
</dbReference>
<dbReference type="PROSITE" id="PS51379">
    <property type="entry name" value="4FE4S_FER_2"/>
    <property type="match status" value="2"/>
</dbReference>
<accession>Q2L956</accession>
<keyword id="KW-0004">4Fe-4S</keyword>
<keyword id="KW-0150">Chloroplast</keyword>
<keyword id="KW-0249">Electron transport</keyword>
<keyword id="KW-0408">Iron</keyword>
<keyword id="KW-0411">Iron-sulfur</keyword>
<keyword id="KW-0472">Membrane</keyword>
<keyword id="KW-0479">Metal-binding</keyword>
<keyword id="KW-0560">Oxidoreductase</keyword>
<keyword id="KW-0602">Photosynthesis</keyword>
<keyword id="KW-0603">Photosystem I</keyword>
<keyword id="KW-0934">Plastid</keyword>
<keyword id="KW-1185">Reference proteome</keyword>
<keyword id="KW-0677">Repeat</keyword>
<keyword id="KW-0793">Thylakoid</keyword>
<keyword id="KW-0813">Transport</keyword>
<proteinExistence type="inferred from homology"/>
<sequence>MSHSVKIYDTCIGCTQCVRACPTDVLEMIPWDGCKAKQIASAPRTEDCVGCKRCESACPTDFLSVRVYLWHETTRSMGLAY</sequence>
<feature type="initiator methionine" description="Removed" evidence="1">
    <location>
        <position position="1"/>
    </location>
</feature>
<feature type="chain" id="PRO_0000275983" description="Photosystem I iron-sulfur center">
    <location>
        <begin position="2"/>
        <end position="81"/>
    </location>
</feature>
<feature type="domain" description="4Fe-4S ferredoxin-type 1" evidence="2">
    <location>
        <begin position="2"/>
        <end position="31"/>
    </location>
</feature>
<feature type="domain" description="4Fe-4S ferredoxin-type 2" evidence="2">
    <location>
        <begin position="39"/>
        <end position="68"/>
    </location>
</feature>
<feature type="binding site" evidence="2">
    <location>
        <position position="11"/>
    </location>
    <ligand>
        <name>[4Fe-4S] cluster</name>
        <dbReference type="ChEBI" id="CHEBI:49883"/>
        <label>1</label>
    </ligand>
</feature>
<feature type="binding site" evidence="2">
    <location>
        <position position="14"/>
    </location>
    <ligand>
        <name>[4Fe-4S] cluster</name>
        <dbReference type="ChEBI" id="CHEBI:49883"/>
        <label>1</label>
    </ligand>
</feature>
<feature type="binding site" evidence="2">
    <location>
        <position position="17"/>
    </location>
    <ligand>
        <name>[4Fe-4S] cluster</name>
        <dbReference type="ChEBI" id="CHEBI:49883"/>
        <label>1</label>
    </ligand>
</feature>
<feature type="binding site" evidence="2">
    <location>
        <position position="21"/>
    </location>
    <ligand>
        <name>[4Fe-4S] cluster</name>
        <dbReference type="ChEBI" id="CHEBI:49883"/>
        <label>2</label>
    </ligand>
</feature>
<feature type="binding site" evidence="2">
    <location>
        <position position="48"/>
    </location>
    <ligand>
        <name>[4Fe-4S] cluster</name>
        <dbReference type="ChEBI" id="CHEBI:49883"/>
        <label>2</label>
    </ligand>
</feature>
<feature type="binding site" evidence="2">
    <location>
        <position position="51"/>
    </location>
    <ligand>
        <name>[4Fe-4S] cluster</name>
        <dbReference type="ChEBI" id="CHEBI:49883"/>
        <label>2</label>
    </ligand>
</feature>
<feature type="binding site" evidence="2">
    <location>
        <position position="54"/>
    </location>
    <ligand>
        <name>[4Fe-4S] cluster</name>
        <dbReference type="ChEBI" id="CHEBI:49883"/>
        <label>2</label>
    </ligand>
</feature>
<feature type="binding site" evidence="2">
    <location>
        <position position="58"/>
    </location>
    <ligand>
        <name>[4Fe-4S] cluster</name>
        <dbReference type="ChEBI" id="CHEBI:49883"/>
        <label>1</label>
    </ligand>
</feature>
<organism>
    <name type="scientific">Gossypium hirsutum</name>
    <name type="common">Upland cotton</name>
    <name type="synonym">Gossypium mexicanum</name>
    <dbReference type="NCBI Taxonomy" id="3635"/>
    <lineage>
        <taxon>Eukaryota</taxon>
        <taxon>Viridiplantae</taxon>
        <taxon>Streptophyta</taxon>
        <taxon>Embryophyta</taxon>
        <taxon>Tracheophyta</taxon>
        <taxon>Spermatophyta</taxon>
        <taxon>Magnoliopsida</taxon>
        <taxon>eudicotyledons</taxon>
        <taxon>Gunneridae</taxon>
        <taxon>Pentapetalae</taxon>
        <taxon>rosids</taxon>
        <taxon>malvids</taxon>
        <taxon>Malvales</taxon>
        <taxon>Malvaceae</taxon>
        <taxon>Malvoideae</taxon>
        <taxon>Gossypium</taxon>
    </lineage>
</organism>
<evidence type="ECO:0000250" key="1"/>
<evidence type="ECO:0000255" key="2">
    <source>
        <dbReference type="HAMAP-Rule" id="MF_01303"/>
    </source>
</evidence>
<comment type="function">
    <text evidence="2">Apoprotein for the two 4Fe-4S centers FA and FB of photosystem I (PSI); essential for photochemical activity. FB is the terminal electron acceptor of PSI, donating electrons to ferredoxin. The C-terminus interacts with PsaA/B/D and helps assemble the protein into the PSI complex. Required for binding of PsaD and PsaE to PSI. PSI is a plastocyanin-ferredoxin oxidoreductase, converting photonic excitation into a charge separation, which transfers an electron from the donor P700 chlorophyll pair to the spectroscopically characterized acceptors A0, A1, FX, FA and FB in turn.</text>
</comment>
<comment type="catalytic activity">
    <reaction evidence="2">
        <text>reduced [plastocyanin] + hnu + oxidized [2Fe-2S]-[ferredoxin] = oxidized [plastocyanin] + reduced [2Fe-2S]-[ferredoxin]</text>
        <dbReference type="Rhea" id="RHEA:30407"/>
        <dbReference type="Rhea" id="RHEA-COMP:10000"/>
        <dbReference type="Rhea" id="RHEA-COMP:10001"/>
        <dbReference type="Rhea" id="RHEA-COMP:10039"/>
        <dbReference type="Rhea" id="RHEA-COMP:10040"/>
        <dbReference type="ChEBI" id="CHEBI:29036"/>
        <dbReference type="ChEBI" id="CHEBI:30212"/>
        <dbReference type="ChEBI" id="CHEBI:33737"/>
        <dbReference type="ChEBI" id="CHEBI:33738"/>
        <dbReference type="ChEBI" id="CHEBI:49552"/>
        <dbReference type="EC" id="1.97.1.12"/>
    </reaction>
</comment>
<comment type="cofactor">
    <cofactor evidence="2">
        <name>[4Fe-4S] cluster</name>
        <dbReference type="ChEBI" id="CHEBI:49883"/>
    </cofactor>
    <text evidence="2">Binds 2 [4Fe-4S] clusters. Cluster 2 is most probably the spectroscopically characterized electron acceptor FA and cluster 1 is most probably FB.</text>
</comment>
<comment type="subunit">
    <text evidence="2">The eukaryotic PSI reaction center is composed of at least 11 subunits.</text>
</comment>
<comment type="subcellular location">
    <subcellularLocation>
        <location evidence="2">Plastid</location>
        <location evidence="2">Chloroplast thylakoid membrane</location>
        <topology evidence="2">Peripheral membrane protein</topology>
        <orientation evidence="2">Stromal side</orientation>
    </subcellularLocation>
</comment>
<geneLocation type="chloroplast"/>